<proteinExistence type="inferred from homology"/>
<dbReference type="EC" id="2.7.8.13" evidence="1"/>
<dbReference type="EMBL" id="CP001336">
    <property type="protein sequence ID" value="ACL22075.1"/>
    <property type="molecule type" value="Genomic_DNA"/>
</dbReference>
<dbReference type="RefSeq" id="WP_015944997.1">
    <property type="nucleotide sequence ID" value="NC_011830.1"/>
</dbReference>
<dbReference type="SMR" id="B8FT59"/>
<dbReference type="KEGG" id="dhd:Dhaf_4066"/>
<dbReference type="HOGENOM" id="CLU_023982_0_0_9"/>
<dbReference type="UniPathway" id="UPA00219"/>
<dbReference type="Proteomes" id="UP000007726">
    <property type="component" value="Chromosome"/>
</dbReference>
<dbReference type="GO" id="GO:0005886">
    <property type="term" value="C:plasma membrane"/>
    <property type="evidence" value="ECO:0007669"/>
    <property type="project" value="UniProtKB-SubCell"/>
</dbReference>
<dbReference type="GO" id="GO:0046872">
    <property type="term" value="F:metal ion binding"/>
    <property type="evidence" value="ECO:0007669"/>
    <property type="project" value="UniProtKB-KW"/>
</dbReference>
<dbReference type="GO" id="GO:0008963">
    <property type="term" value="F:phospho-N-acetylmuramoyl-pentapeptide-transferase activity"/>
    <property type="evidence" value="ECO:0007669"/>
    <property type="project" value="UniProtKB-UniRule"/>
</dbReference>
<dbReference type="GO" id="GO:0051992">
    <property type="term" value="F:UDP-N-acetylmuramoyl-L-alanyl-D-glutamyl-meso-2,6-diaminopimelyl-D-alanyl-D-alanine:undecaprenyl-phosphate transferase activity"/>
    <property type="evidence" value="ECO:0007669"/>
    <property type="project" value="RHEA"/>
</dbReference>
<dbReference type="GO" id="GO:0051301">
    <property type="term" value="P:cell division"/>
    <property type="evidence" value="ECO:0007669"/>
    <property type="project" value="UniProtKB-KW"/>
</dbReference>
<dbReference type="GO" id="GO:0071555">
    <property type="term" value="P:cell wall organization"/>
    <property type="evidence" value="ECO:0007669"/>
    <property type="project" value="UniProtKB-KW"/>
</dbReference>
<dbReference type="GO" id="GO:0009252">
    <property type="term" value="P:peptidoglycan biosynthetic process"/>
    <property type="evidence" value="ECO:0007669"/>
    <property type="project" value="UniProtKB-UniRule"/>
</dbReference>
<dbReference type="GO" id="GO:0008360">
    <property type="term" value="P:regulation of cell shape"/>
    <property type="evidence" value="ECO:0007669"/>
    <property type="project" value="UniProtKB-KW"/>
</dbReference>
<dbReference type="CDD" id="cd06852">
    <property type="entry name" value="GT_MraY"/>
    <property type="match status" value="1"/>
</dbReference>
<dbReference type="HAMAP" id="MF_00038">
    <property type="entry name" value="MraY"/>
    <property type="match status" value="1"/>
</dbReference>
<dbReference type="InterPro" id="IPR000715">
    <property type="entry name" value="Glycosyl_transferase_4"/>
</dbReference>
<dbReference type="InterPro" id="IPR003524">
    <property type="entry name" value="PNAcMuramoyl-5peptid_Trfase"/>
</dbReference>
<dbReference type="InterPro" id="IPR018480">
    <property type="entry name" value="PNAcMuramoyl-5peptid_Trfase_CS"/>
</dbReference>
<dbReference type="NCBIfam" id="TIGR00445">
    <property type="entry name" value="mraY"/>
    <property type="match status" value="1"/>
</dbReference>
<dbReference type="PANTHER" id="PTHR22926">
    <property type="entry name" value="PHOSPHO-N-ACETYLMURAMOYL-PENTAPEPTIDE-TRANSFERASE"/>
    <property type="match status" value="1"/>
</dbReference>
<dbReference type="PANTHER" id="PTHR22926:SF5">
    <property type="entry name" value="PHOSPHO-N-ACETYLMURAMOYL-PENTAPEPTIDE-TRANSFERASE HOMOLOG"/>
    <property type="match status" value="1"/>
</dbReference>
<dbReference type="Pfam" id="PF00953">
    <property type="entry name" value="Glycos_transf_4"/>
    <property type="match status" value="1"/>
</dbReference>
<dbReference type="Pfam" id="PF10555">
    <property type="entry name" value="MraY_sig1"/>
    <property type="match status" value="1"/>
</dbReference>
<dbReference type="PROSITE" id="PS01347">
    <property type="entry name" value="MRAY_1"/>
    <property type="match status" value="1"/>
</dbReference>
<dbReference type="PROSITE" id="PS01348">
    <property type="entry name" value="MRAY_2"/>
    <property type="match status" value="1"/>
</dbReference>
<evidence type="ECO:0000255" key="1">
    <source>
        <dbReference type="HAMAP-Rule" id="MF_00038"/>
    </source>
</evidence>
<sequence length="335" mass="35999">MWERIFLAAALALMITLILGPLMIPVLRVMKFGQTIREEGPKRHLAKAGTPTMGGIIFLVGIVVSALIMAEKPTSLEMVMVISAMLGYGLIGFIDDFIKVVLHRSLGLRAYQKLIGQIALALLLTWGANRYLGRGTDLVIPFTSIHLELGLFYYPFVSFIIVGITNAVNLTDGLDGLAAGTTLFSMLSYVSIATLAASQGGGVAILAYESDLAVFAAAAVGGCFGFLRFNKNPARVFMGDTGSLALGGALVGLAVLTKTELILLIIGGVYVVEAISVILQVFSYQTTGKRIFRMSPLHHHFELGGWNEWKVVMVFWLASLLCGVLGVIAYMAGMF</sequence>
<organism>
    <name type="scientific">Desulfitobacterium hafniense (strain DSM 10664 / DCB-2)</name>
    <dbReference type="NCBI Taxonomy" id="272564"/>
    <lineage>
        <taxon>Bacteria</taxon>
        <taxon>Bacillati</taxon>
        <taxon>Bacillota</taxon>
        <taxon>Clostridia</taxon>
        <taxon>Eubacteriales</taxon>
        <taxon>Desulfitobacteriaceae</taxon>
        <taxon>Desulfitobacterium</taxon>
    </lineage>
</organism>
<gene>
    <name evidence="1" type="primary">mraY</name>
    <name type="ordered locus">Dhaf_4066</name>
</gene>
<name>MRAY_DESHD</name>
<reference key="1">
    <citation type="journal article" date="2012" name="BMC Microbiol.">
        <title>Genome sequence of Desulfitobacterium hafniense DCB-2, a Gram-positive anaerobe capable of dehalogenation and metal reduction.</title>
        <authorList>
            <person name="Kim S.H."/>
            <person name="Harzman C."/>
            <person name="Davis J.K."/>
            <person name="Hutcheson R."/>
            <person name="Broderick J.B."/>
            <person name="Marsh T.L."/>
            <person name="Tiedje J.M."/>
        </authorList>
    </citation>
    <scope>NUCLEOTIDE SEQUENCE [LARGE SCALE GENOMIC DNA]</scope>
    <source>
        <strain>DSM 10664 / DCB-2</strain>
    </source>
</reference>
<protein>
    <recommendedName>
        <fullName evidence="1">Phospho-N-acetylmuramoyl-pentapeptide-transferase</fullName>
        <ecNumber evidence="1">2.7.8.13</ecNumber>
    </recommendedName>
    <alternativeName>
        <fullName evidence="1">UDP-MurNAc-pentapeptide phosphotransferase</fullName>
    </alternativeName>
</protein>
<comment type="function">
    <text evidence="1">Catalyzes the initial step of the lipid cycle reactions in the biosynthesis of the cell wall peptidoglycan: transfers peptidoglycan precursor phospho-MurNAc-pentapeptide from UDP-MurNAc-pentapeptide onto the lipid carrier undecaprenyl phosphate, yielding undecaprenyl-pyrophosphoryl-MurNAc-pentapeptide, known as lipid I.</text>
</comment>
<comment type="catalytic activity">
    <reaction evidence="1">
        <text>UDP-N-acetyl-alpha-D-muramoyl-L-alanyl-gamma-D-glutamyl-meso-2,6-diaminopimeloyl-D-alanyl-D-alanine + di-trans,octa-cis-undecaprenyl phosphate = di-trans,octa-cis-undecaprenyl diphospho-N-acetyl-alpha-D-muramoyl-L-alanyl-D-glutamyl-meso-2,6-diaminopimeloyl-D-alanyl-D-alanine + UMP</text>
        <dbReference type="Rhea" id="RHEA:28386"/>
        <dbReference type="ChEBI" id="CHEBI:57865"/>
        <dbReference type="ChEBI" id="CHEBI:60392"/>
        <dbReference type="ChEBI" id="CHEBI:61386"/>
        <dbReference type="ChEBI" id="CHEBI:61387"/>
        <dbReference type="EC" id="2.7.8.13"/>
    </reaction>
</comment>
<comment type="cofactor">
    <cofactor evidence="1">
        <name>Mg(2+)</name>
        <dbReference type="ChEBI" id="CHEBI:18420"/>
    </cofactor>
</comment>
<comment type="pathway">
    <text evidence="1">Cell wall biogenesis; peptidoglycan biosynthesis.</text>
</comment>
<comment type="subcellular location">
    <subcellularLocation>
        <location evidence="1">Cell membrane</location>
        <topology evidence="1">Multi-pass membrane protein</topology>
    </subcellularLocation>
</comment>
<comment type="similarity">
    <text evidence="1">Belongs to the glycosyltransferase 4 family. MraY subfamily.</text>
</comment>
<feature type="chain" id="PRO_1000117177" description="Phospho-N-acetylmuramoyl-pentapeptide-transferase">
    <location>
        <begin position="1"/>
        <end position="335"/>
    </location>
</feature>
<feature type="transmembrane region" description="Helical" evidence="1">
    <location>
        <begin position="5"/>
        <end position="25"/>
    </location>
</feature>
<feature type="transmembrane region" description="Helical" evidence="1">
    <location>
        <begin position="50"/>
        <end position="70"/>
    </location>
</feature>
<feature type="transmembrane region" description="Helical" evidence="1">
    <location>
        <begin position="78"/>
        <end position="98"/>
    </location>
</feature>
<feature type="transmembrane region" description="Helical" evidence="1">
    <location>
        <begin position="114"/>
        <end position="133"/>
    </location>
</feature>
<feature type="transmembrane region" description="Helical" evidence="1">
    <location>
        <begin position="145"/>
        <end position="165"/>
    </location>
</feature>
<feature type="transmembrane region" description="Helical" evidence="1">
    <location>
        <begin position="177"/>
        <end position="197"/>
    </location>
</feature>
<feature type="transmembrane region" description="Helical" evidence="1">
    <location>
        <begin position="200"/>
        <end position="220"/>
    </location>
</feature>
<feature type="transmembrane region" description="Helical" evidence="1">
    <location>
        <begin position="236"/>
        <end position="256"/>
    </location>
</feature>
<feature type="transmembrane region" description="Helical" evidence="1">
    <location>
        <begin position="262"/>
        <end position="282"/>
    </location>
</feature>
<feature type="transmembrane region" description="Helical" evidence="1">
    <location>
        <begin position="311"/>
        <end position="331"/>
    </location>
</feature>
<keyword id="KW-0131">Cell cycle</keyword>
<keyword id="KW-0132">Cell division</keyword>
<keyword id="KW-1003">Cell membrane</keyword>
<keyword id="KW-0133">Cell shape</keyword>
<keyword id="KW-0961">Cell wall biogenesis/degradation</keyword>
<keyword id="KW-0460">Magnesium</keyword>
<keyword id="KW-0472">Membrane</keyword>
<keyword id="KW-0479">Metal-binding</keyword>
<keyword id="KW-0573">Peptidoglycan synthesis</keyword>
<keyword id="KW-0808">Transferase</keyword>
<keyword id="KW-0812">Transmembrane</keyword>
<keyword id="KW-1133">Transmembrane helix</keyword>
<accession>B8FT59</accession>